<accession>Q3ALS9</accession>
<organism>
    <name type="scientific">Synechococcus sp. (strain CC9605)</name>
    <dbReference type="NCBI Taxonomy" id="110662"/>
    <lineage>
        <taxon>Bacteria</taxon>
        <taxon>Bacillati</taxon>
        <taxon>Cyanobacteriota</taxon>
        <taxon>Cyanophyceae</taxon>
        <taxon>Synechococcales</taxon>
        <taxon>Synechococcaceae</taxon>
        <taxon>Synechococcus</taxon>
    </lineage>
</organism>
<comment type="function">
    <text evidence="1">Tetrapolymerization of the monopyrrole PBG into the hydroxymethylbilane pre-uroporphyrinogen in several discrete steps.</text>
</comment>
<comment type="catalytic activity">
    <reaction evidence="1">
        <text>4 porphobilinogen + H2O = hydroxymethylbilane + 4 NH4(+)</text>
        <dbReference type="Rhea" id="RHEA:13185"/>
        <dbReference type="ChEBI" id="CHEBI:15377"/>
        <dbReference type="ChEBI" id="CHEBI:28938"/>
        <dbReference type="ChEBI" id="CHEBI:57845"/>
        <dbReference type="ChEBI" id="CHEBI:58126"/>
        <dbReference type="EC" id="2.5.1.61"/>
    </reaction>
</comment>
<comment type="cofactor">
    <cofactor evidence="1">
        <name>dipyrromethane</name>
        <dbReference type="ChEBI" id="CHEBI:60342"/>
    </cofactor>
    <text evidence="1">Binds 1 dipyrromethane group covalently.</text>
</comment>
<comment type="pathway">
    <text evidence="1">Porphyrin-containing compound metabolism; protoporphyrin-IX biosynthesis; coproporphyrinogen-III from 5-aminolevulinate: step 2/4.</text>
</comment>
<comment type="pathway">
    <text evidence="1">Porphyrin-containing compound metabolism; chlorophyll biosynthesis.</text>
</comment>
<comment type="subunit">
    <text evidence="1">Monomer.</text>
</comment>
<comment type="miscellaneous">
    <text evidence="1">The porphobilinogen subunits are added to the dipyrromethane group.</text>
</comment>
<comment type="similarity">
    <text evidence="1">Belongs to the HMBS family.</text>
</comment>
<name>HEM3_SYNSC</name>
<protein>
    <recommendedName>
        <fullName evidence="1">Porphobilinogen deaminase</fullName>
        <shortName evidence="1">PBG</shortName>
        <ecNumber evidence="1">2.5.1.61</ecNumber>
    </recommendedName>
    <alternativeName>
        <fullName evidence="1">Hydroxymethylbilane synthase</fullName>
        <shortName evidence="1">HMBS</shortName>
    </alternativeName>
    <alternativeName>
        <fullName evidence="1">Pre-uroporphyrinogen synthase</fullName>
    </alternativeName>
</protein>
<dbReference type="EC" id="2.5.1.61" evidence="1"/>
<dbReference type="EMBL" id="CP000110">
    <property type="protein sequence ID" value="ABB34453.1"/>
    <property type="molecule type" value="Genomic_DNA"/>
</dbReference>
<dbReference type="RefSeq" id="WP_011363681.1">
    <property type="nucleotide sequence ID" value="NC_007516.1"/>
</dbReference>
<dbReference type="SMR" id="Q3ALS9"/>
<dbReference type="STRING" id="110662.Syncc9605_0679"/>
<dbReference type="KEGG" id="syd:Syncc9605_0679"/>
<dbReference type="eggNOG" id="COG0181">
    <property type="taxonomic scope" value="Bacteria"/>
</dbReference>
<dbReference type="HOGENOM" id="CLU_019704_0_2_3"/>
<dbReference type="OrthoDB" id="9810298at2"/>
<dbReference type="UniPathway" id="UPA00251">
    <property type="reaction ID" value="UER00319"/>
</dbReference>
<dbReference type="UniPathway" id="UPA00668"/>
<dbReference type="GO" id="GO:0005737">
    <property type="term" value="C:cytoplasm"/>
    <property type="evidence" value="ECO:0007669"/>
    <property type="project" value="TreeGrafter"/>
</dbReference>
<dbReference type="GO" id="GO:0004418">
    <property type="term" value="F:hydroxymethylbilane synthase activity"/>
    <property type="evidence" value="ECO:0007669"/>
    <property type="project" value="UniProtKB-UniRule"/>
</dbReference>
<dbReference type="GO" id="GO:0015995">
    <property type="term" value="P:chlorophyll biosynthetic process"/>
    <property type="evidence" value="ECO:0007669"/>
    <property type="project" value="UniProtKB-UniPathway"/>
</dbReference>
<dbReference type="GO" id="GO:0006782">
    <property type="term" value="P:protoporphyrinogen IX biosynthetic process"/>
    <property type="evidence" value="ECO:0007669"/>
    <property type="project" value="UniProtKB-UniRule"/>
</dbReference>
<dbReference type="CDD" id="cd13645">
    <property type="entry name" value="PBP2_HuPBGD_like"/>
    <property type="match status" value="1"/>
</dbReference>
<dbReference type="FunFam" id="3.30.160.40:FF:000002">
    <property type="entry name" value="Porphobilinogen deaminase"/>
    <property type="match status" value="1"/>
</dbReference>
<dbReference type="FunFam" id="3.40.190.10:FF:000004">
    <property type="entry name" value="Porphobilinogen deaminase"/>
    <property type="match status" value="1"/>
</dbReference>
<dbReference type="FunFam" id="3.40.190.10:FF:000005">
    <property type="entry name" value="Porphobilinogen deaminase"/>
    <property type="match status" value="1"/>
</dbReference>
<dbReference type="Gene3D" id="3.40.190.10">
    <property type="entry name" value="Periplasmic binding protein-like II"/>
    <property type="match status" value="2"/>
</dbReference>
<dbReference type="Gene3D" id="3.30.160.40">
    <property type="entry name" value="Porphobilinogen deaminase, C-terminal domain"/>
    <property type="match status" value="1"/>
</dbReference>
<dbReference type="HAMAP" id="MF_00260">
    <property type="entry name" value="Porphobil_deam"/>
    <property type="match status" value="1"/>
</dbReference>
<dbReference type="InterPro" id="IPR000860">
    <property type="entry name" value="HemC"/>
</dbReference>
<dbReference type="InterPro" id="IPR022419">
    <property type="entry name" value="Porphobilin_deaminase_cofac_BS"/>
</dbReference>
<dbReference type="InterPro" id="IPR022417">
    <property type="entry name" value="Porphobilin_deaminase_N"/>
</dbReference>
<dbReference type="InterPro" id="IPR022418">
    <property type="entry name" value="Porphobilinogen_deaminase_C"/>
</dbReference>
<dbReference type="InterPro" id="IPR036803">
    <property type="entry name" value="Porphobilinogen_deaminase_C_sf"/>
</dbReference>
<dbReference type="NCBIfam" id="TIGR00212">
    <property type="entry name" value="hemC"/>
    <property type="match status" value="1"/>
</dbReference>
<dbReference type="PANTHER" id="PTHR11557">
    <property type="entry name" value="PORPHOBILINOGEN DEAMINASE"/>
    <property type="match status" value="1"/>
</dbReference>
<dbReference type="PANTHER" id="PTHR11557:SF0">
    <property type="entry name" value="PORPHOBILINOGEN DEAMINASE"/>
    <property type="match status" value="1"/>
</dbReference>
<dbReference type="Pfam" id="PF01379">
    <property type="entry name" value="Porphobil_deam"/>
    <property type="match status" value="1"/>
</dbReference>
<dbReference type="Pfam" id="PF03900">
    <property type="entry name" value="Porphobil_deamC"/>
    <property type="match status" value="1"/>
</dbReference>
<dbReference type="PIRSF" id="PIRSF001438">
    <property type="entry name" value="4pyrrol_synth_OHMeBilane_synth"/>
    <property type="match status" value="1"/>
</dbReference>
<dbReference type="PRINTS" id="PR00151">
    <property type="entry name" value="PORPHBDMNASE"/>
</dbReference>
<dbReference type="SUPFAM" id="SSF53850">
    <property type="entry name" value="Periplasmic binding protein-like II"/>
    <property type="match status" value="1"/>
</dbReference>
<dbReference type="SUPFAM" id="SSF54782">
    <property type="entry name" value="Porphobilinogen deaminase (hydroxymethylbilane synthase), C-terminal domain"/>
    <property type="match status" value="1"/>
</dbReference>
<dbReference type="PROSITE" id="PS00533">
    <property type="entry name" value="PORPHOBILINOGEN_DEAM"/>
    <property type="match status" value="1"/>
</dbReference>
<gene>
    <name evidence="1" type="primary">hemC</name>
    <name type="ordered locus">Syncc9605_0679</name>
</gene>
<feature type="chain" id="PRO_0000304281" description="Porphobilinogen deaminase">
    <location>
        <begin position="1"/>
        <end position="317"/>
    </location>
</feature>
<feature type="modified residue" description="S-(dipyrrolylmethanemethyl)cysteine" evidence="1">
    <location>
        <position position="245"/>
    </location>
</feature>
<reference key="1">
    <citation type="submission" date="2005-07" db="EMBL/GenBank/DDBJ databases">
        <title>Complete sequence of Synechococcus sp. CC9605.</title>
        <authorList>
            <consortium name="US DOE Joint Genome Institute"/>
            <person name="Copeland A."/>
            <person name="Lucas S."/>
            <person name="Lapidus A."/>
            <person name="Barry K."/>
            <person name="Detter J.C."/>
            <person name="Glavina T."/>
            <person name="Hammon N."/>
            <person name="Israni S."/>
            <person name="Pitluck S."/>
            <person name="Schmutz J."/>
            <person name="Martinez M."/>
            <person name="Larimer F."/>
            <person name="Land M."/>
            <person name="Kyrpides N."/>
            <person name="Ivanova N."/>
            <person name="Richardson P."/>
        </authorList>
    </citation>
    <scope>NUCLEOTIDE SEQUENCE [LARGE SCALE GENOMIC DNA]</scope>
    <source>
        <strain>CC9605</strain>
    </source>
</reference>
<proteinExistence type="inferred from homology"/>
<evidence type="ECO:0000255" key="1">
    <source>
        <dbReference type="HAMAP-Rule" id="MF_00260"/>
    </source>
</evidence>
<sequence>MALTELRIASRRSQLAMVQTNWVKAELEKAHPGLKITVEAMATQGDKILDVALAKIGDKGLFTKELEAQMLVDRADIAVHSLKDLPTNLPEGLMLGCITEREDPADALVVNAKNQAYKLETLPEGSVVGTSSLRRLAQLRHHYPHLIFKDVRGNVITRLEKLDSGDYDCLILAAAGLGRLGFSDRIHQLIPGEISLHAVGQGALGIECVEGKPEVLEAIKVLEHTPTSQRCLAERAFLRELEGGCQVPIGVNTRFEGDQLILTGMVASLDGKRLIRDQTSGEASEAEAIGIALANTLKGQGAGEILKEIFETVRPEA</sequence>
<keyword id="KW-0149">Chlorophyll biosynthesis</keyword>
<keyword id="KW-0627">Porphyrin biosynthesis</keyword>
<keyword id="KW-0808">Transferase</keyword>